<name>SY132_ARATH</name>
<proteinExistence type="evidence at protein level"/>
<keyword id="KW-0007">Acetylation</keyword>
<keyword id="KW-0025">Alternative splicing</keyword>
<keyword id="KW-0131">Cell cycle</keyword>
<keyword id="KW-0132">Cell division</keyword>
<keyword id="KW-1003">Cell membrane</keyword>
<keyword id="KW-0175">Coiled coil</keyword>
<keyword id="KW-0341">Growth regulation</keyword>
<keyword id="KW-0472">Membrane</keyword>
<keyword id="KW-0653">Protein transport</keyword>
<keyword id="KW-1185">Reference proteome</keyword>
<keyword id="KW-0812">Transmembrane</keyword>
<keyword id="KW-1133">Transmembrane helix</keyword>
<keyword id="KW-0813">Transport</keyword>
<feature type="chain" id="PRO_0000210252" description="Syntaxin-132">
    <location>
        <begin position="1"/>
        <end position="304"/>
    </location>
</feature>
<feature type="topological domain" description="Cytoplasmic" evidence="3">
    <location>
        <begin position="1"/>
        <end position="275"/>
    </location>
</feature>
<feature type="transmembrane region" description="Helical; Anchor for type IV membrane protein" evidence="3">
    <location>
        <begin position="276"/>
        <end position="296"/>
    </location>
</feature>
<feature type="topological domain" description="Vesicular" evidence="3">
    <location>
        <begin position="297"/>
        <end position="304"/>
    </location>
</feature>
<feature type="domain" description="t-SNARE coiled-coil homology" evidence="4">
    <location>
        <begin position="204"/>
        <end position="266"/>
    </location>
</feature>
<feature type="region of interest" description="Disordered" evidence="5">
    <location>
        <begin position="1"/>
        <end position="30"/>
    </location>
</feature>
<feature type="coiled-coil region" evidence="3">
    <location>
        <begin position="34"/>
        <end position="67"/>
    </location>
</feature>
<feature type="coiled-coil region" evidence="3">
    <location>
        <begin position="129"/>
        <end position="162"/>
    </location>
</feature>
<feature type="modified residue" description="N-acetylmethionine" evidence="2">
    <location>
        <position position="1"/>
    </location>
</feature>
<dbReference type="EMBL" id="AL357612">
    <property type="protein sequence ID" value="CAB93709.1"/>
    <property type="status" value="ALT_SEQ"/>
    <property type="molecule type" value="Genomic_DNA"/>
</dbReference>
<dbReference type="EMBL" id="CP002688">
    <property type="protein sequence ID" value="AED91242.1"/>
    <property type="molecule type" value="Genomic_DNA"/>
</dbReference>
<dbReference type="EMBL" id="CP002688">
    <property type="protein sequence ID" value="ANM70609.1"/>
    <property type="molecule type" value="Genomic_DNA"/>
</dbReference>
<dbReference type="EMBL" id="AY063836">
    <property type="protein sequence ID" value="AAL36192.1"/>
    <property type="molecule type" value="mRNA"/>
</dbReference>
<dbReference type="EMBL" id="AY117244">
    <property type="protein sequence ID" value="AAM51319.1"/>
    <property type="molecule type" value="mRNA"/>
</dbReference>
<dbReference type="PIR" id="T50493">
    <property type="entry name" value="T50493"/>
</dbReference>
<dbReference type="RefSeq" id="NP_001332203.1">
    <molecule id="Q8VZU2-1"/>
    <property type="nucleotide sequence ID" value="NM_001342979.1"/>
</dbReference>
<dbReference type="RefSeq" id="NP_568187.1">
    <molecule id="Q8VZU2-1"/>
    <property type="nucleotide sequence ID" value="NM_120890.3"/>
</dbReference>
<dbReference type="SMR" id="Q8VZU2"/>
<dbReference type="BioGRID" id="15980">
    <property type="interactions" value="55"/>
</dbReference>
<dbReference type="FunCoup" id="Q8VZU2">
    <property type="interactions" value="2674"/>
</dbReference>
<dbReference type="IntAct" id="Q8VZU2">
    <property type="interactions" value="53"/>
</dbReference>
<dbReference type="STRING" id="3702.Q8VZU2"/>
<dbReference type="iPTMnet" id="Q8VZU2"/>
<dbReference type="SwissPalm" id="Q8VZU2"/>
<dbReference type="PaxDb" id="3702-AT5G08080.3"/>
<dbReference type="ProteomicsDB" id="226775">
    <molecule id="Q8VZU2-1"/>
</dbReference>
<dbReference type="EnsemblPlants" id="AT5G08080.1">
    <molecule id="Q8VZU2-1"/>
    <property type="protein sequence ID" value="AT5G08080.1"/>
    <property type="gene ID" value="AT5G08080"/>
</dbReference>
<dbReference type="EnsemblPlants" id="AT5G08080.4">
    <molecule id="Q8VZU2-1"/>
    <property type="protein sequence ID" value="AT5G08080.4"/>
    <property type="gene ID" value="AT5G08080"/>
</dbReference>
<dbReference type="GeneID" id="830702"/>
<dbReference type="Gramene" id="AT5G08080.1">
    <molecule id="Q8VZU2-1"/>
    <property type="protein sequence ID" value="AT5G08080.1"/>
    <property type="gene ID" value="AT5G08080"/>
</dbReference>
<dbReference type="Gramene" id="AT5G08080.4">
    <molecule id="Q8VZU2-1"/>
    <property type="protein sequence ID" value="AT5G08080.4"/>
    <property type="gene ID" value="AT5G08080"/>
</dbReference>
<dbReference type="KEGG" id="ath:AT5G08080"/>
<dbReference type="Araport" id="AT5G08080"/>
<dbReference type="TAIR" id="AT5G08080">
    <property type="gene designation" value="SYP132"/>
</dbReference>
<dbReference type="eggNOG" id="KOG0810">
    <property type="taxonomic scope" value="Eukaryota"/>
</dbReference>
<dbReference type="InParanoid" id="Q8VZU2"/>
<dbReference type="OMA" id="RWICFIL"/>
<dbReference type="OrthoDB" id="10255013at2759"/>
<dbReference type="PhylomeDB" id="Q8VZU2"/>
<dbReference type="PRO" id="PR:Q8VZU2"/>
<dbReference type="Proteomes" id="UP000006548">
    <property type="component" value="Chromosome 5"/>
</dbReference>
<dbReference type="ExpressionAtlas" id="Q8VZU2">
    <property type="expression patterns" value="baseline and differential"/>
</dbReference>
<dbReference type="GO" id="GO:0005886">
    <property type="term" value="C:plasma membrane"/>
    <property type="evidence" value="ECO:0007669"/>
    <property type="project" value="UniProtKB-SubCell"/>
</dbReference>
<dbReference type="GO" id="GO:0005484">
    <property type="term" value="F:SNAP receptor activity"/>
    <property type="evidence" value="ECO:0007669"/>
    <property type="project" value="InterPro"/>
</dbReference>
<dbReference type="GO" id="GO:0051301">
    <property type="term" value="P:cell division"/>
    <property type="evidence" value="ECO:0007669"/>
    <property type="project" value="UniProtKB-KW"/>
</dbReference>
<dbReference type="GO" id="GO:0006886">
    <property type="term" value="P:intracellular protein transport"/>
    <property type="evidence" value="ECO:0007669"/>
    <property type="project" value="InterPro"/>
</dbReference>
<dbReference type="GO" id="GO:0016192">
    <property type="term" value="P:vesicle-mediated transport"/>
    <property type="evidence" value="ECO:0007669"/>
    <property type="project" value="InterPro"/>
</dbReference>
<dbReference type="CDD" id="cd15848">
    <property type="entry name" value="SNARE_syntaxin1-like"/>
    <property type="match status" value="1"/>
</dbReference>
<dbReference type="CDD" id="cd00179">
    <property type="entry name" value="SynN"/>
    <property type="match status" value="1"/>
</dbReference>
<dbReference type="FunFam" id="1.20.5.110:FF:000008">
    <property type="entry name" value="Syntaxin 132"/>
    <property type="match status" value="1"/>
</dbReference>
<dbReference type="FunFam" id="1.20.58.70:FF:000013">
    <property type="entry name" value="Syntaxin 132"/>
    <property type="match status" value="1"/>
</dbReference>
<dbReference type="Gene3D" id="1.20.5.110">
    <property type="match status" value="1"/>
</dbReference>
<dbReference type="Gene3D" id="1.20.58.70">
    <property type="match status" value="1"/>
</dbReference>
<dbReference type="InterPro" id="IPR010989">
    <property type="entry name" value="SNARE"/>
</dbReference>
<dbReference type="InterPro" id="IPR045242">
    <property type="entry name" value="Syntaxin"/>
</dbReference>
<dbReference type="InterPro" id="IPR006012">
    <property type="entry name" value="Syntaxin/epimorphin_CS"/>
</dbReference>
<dbReference type="InterPro" id="IPR006011">
    <property type="entry name" value="Syntaxin_N"/>
</dbReference>
<dbReference type="InterPro" id="IPR000727">
    <property type="entry name" value="T_SNARE_dom"/>
</dbReference>
<dbReference type="PANTHER" id="PTHR19957:SF307">
    <property type="entry name" value="PROTEIN SSO1-RELATED"/>
    <property type="match status" value="1"/>
</dbReference>
<dbReference type="PANTHER" id="PTHR19957">
    <property type="entry name" value="SYNTAXIN"/>
    <property type="match status" value="1"/>
</dbReference>
<dbReference type="Pfam" id="PF05739">
    <property type="entry name" value="SNARE"/>
    <property type="match status" value="1"/>
</dbReference>
<dbReference type="Pfam" id="PF00804">
    <property type="entry name" value="Syntaxin"/>
    <property type="match status" value="1"/>
</dbReference>
<dbReference type="SMART" id="SM00503">
    <property type="entry name" value="SynN"/>
    <property type="match status" value="1"/>
</dbReference>
<dbReference type="SMART" id="SM00397">
    <property type="entry name" value="t_SNARE"/>
    <property type="match status" value="1"/>
</dbReference>
<dbReference type="SUPFAM" id="SSF47661">
    <property type="entry name" value="t-snare proteins"/>
    <property type="match status" value="1"/>
</dbReference>
<dbReference type="PROSITE" id="PS00914">
    <property type="entry name" value="SYNTAXIN"/>
    <property type="match status" value="1"/>
</dbReference>
<dbReference type="PROSITE" id="PS50192">
    <property type="entry name" value="T_SNARE"/>
    <property type="match status" value="1"/>
</dbReference>
<accession>Q8VZU2</accession>
<accession>Q9LEZ8</accession>
<sequence length="304" mass="34225">MNDLLKGSFELPRGQSSREGDVELGEQQGGDQGLEDFFKKVQVIDKQYDKLDKLLKKLQASHEESKSVTKAPAMKAIKKTMEKDVDEVGSIARFIKGKLEELDRENLANRQKPGCAKGSGVDRSRTATTLSLKKKLKDKMAEFQVLRENIQQEYRDVVDRRVYTVTGERADEDTIDELIETGNSEQIFQKAIQEQGRGQVMDTLAEIQERHDAVRDLEKKLLDLQQIFLDMAVLVDAQGEMLDNIESQVSSAVDHVQSGNTALQRAKSLQKNSRKWMCIAIIILLIVVAVIVVGVLKPWKNKSA</sequence>
<evidence type="ECO:0000250" key="1"/>
<evidence type="ECO:0000250" key="2">
    <source>
        <dbReference type="UniProtKB" id="Q9ZSD4"/>
    </source>
</evidence>
<evidence type="ECO:0000255" key="3"/>
<evidence type="ECO:0000255" key="4">
    <source>
        <dbReference type="PROSITE-ProRule" id="PRU00202"/>
    </source>
</evidence>
<evidence type="ECO:0000256" key="5">
    <source>
        <dbReference type="SAM" id="MobiDB-lite"/>
    </source>
</evidence>
<evidence type="ECO:0000269" key="6">
    <source>
    </source>
</evidence>
<evidence type="ECO:0000269" key="7">
    <source>
    </source>
</evidence>
<evidence type="ECO:0000269" key="8">
    <source>
    </source>
</evidence>
<evidence type="ECO:0000269" key="9">
    <source>
    </source>
</evidence>
<evidence type="ECO:0000303" key="10">
    <source>
    </source>
</evidence>
<evidence type="ECO:0000305" key="11"/>
<evidence type="ECO:0000305" key="12">
    <source>
    </source>
</evidence>
<evidence type="ECO:0000312" key="13">
    <source>
        <dbReference type="Araport" id="AT5G08080"/>
    </source>
</evidence>
<evidence type="ECO:0000312" key="14">
    <source>
        <dbReference type="EMBL" id="CAB93709.1"/>
    </source>
</evidence>
<gene>
    <name evidence="10" type="primary">SYP132</name>
    <name evidence="13" type="ordered locus">At5g08080</name>
    <name evidence="14" type="ORF">T22D6.20</name>
</gene>
<protein>
    <recommendedName>
        <fullName evidence="11">Syntaxin-132</fullName>
        <shortName evidence="11">AtSYP132</shortName>
    </recommendedName>
</protein>
<reference key="1">
    <citation type="journal article" date="2000" name="Nature">
        <title>Sequence and analysis of chromosome 5 of the plant Arabidopsis thaliana.</title>
        <authorList>
            <person name="Tabata S."/>
            <person name="Kaneko T."/>
            <person name="Nakamura Y."/>
            <person name="Kotani H."/>
            <person name="Kato T."/>
            <person name="Asamizu E."/>
            <person name="Miyajima N."/>
            <person name="Sasamoto S."/>
            <person name="Kimura T."/>
            <person name="Hosouchi T."/>
            <person name="Kawashima K."/>
            <person name="Kohara M."/>
            <person name="Matsumoto M."/>
            <person name="Matsuno A."/>
            <person name="Muraki A."/>
            <person name="Nakayama S."/>
            <person name="Nakazaki N."/>
            <person name="Naruo K."/>
            <person name="Okumura S."/>
            <person name="Shinpo S."/>
            <person name="Takeuchi C."/>
            <person name="Wada T."/>
            <person name="Watanabe A."/>
            <person name="Yamada M."/>
            <person name="Yasuda M."/>
            <person name="Sato S."/>
            <person name="de la Bastide M."/>
            <person name="Huang E."/>
            <person name="Spiegel L."/>
            <person name="Gnoj L."/>
            <person name="O'Shaughnessy A."/>
            <person name="Preston R."/>
            <person name="Habermann K."/>
            <person name="Murray J."/>
            <person name="Johnson D."/>
            <person name="Rohlfing T."/>
            <person name="Nelson J."/>
            <person name="Stoneking T."/>
            <person name="Pepin K."/>
            <person name="Spieth J."/>
            <person name="Sekhon M."/>
            <person name="Armstrong J."/>
            <person name="Becker M."/>
            <person name="Belter E."/>
            <person name="Cordum H."/>
            <person name="Cordes M."/>
            <person name="Courtney L."/>
            <person name="Courtney W."/>
            <person name="Dante M."/>
            <person name="Du H."/>
            <person name="Edwards J."/>
            <person name="Fryman J."/>
            <person name="Haakensen B."/>
            <person name="Lamar E."/>
            <person name="Latreille P."/>
            <person name="Leonard S."/>
            <person name="Meyer R."/>
            <person name="Mulvaney E."/>
            <person name="Ozersky P."/>
            <person name="Riley A."/>
            <person name="Strowmatt C."/>
            <person name="Wagner-McPherson C."/>
            <person name="Wollam A."/>
            <person name="Yoakum M."/>
            <person name="Bell M."/>
            <person name="Dedhia N."/>
            <person name="Parnell L."/>
            <person name="Shah R."/>
            <person name="Rodriguez M."/>
            <person name="Hoon See L."/>
            <person name="Vil D."/>
            <person name="Baker J."/>
            <person name="Kirchoff K."/>
            <person name="Toth K."/>
            <person name="King L."/>
            <person name="Bahret A."/>
            <person name="Miller B."/>
            <person name="Marra M.A."/>
            <person name="Martienssen R."/>
            <person name="McCombie W.R."/>
            <person name="Wilson R.K."/>
            <person name="Murphy G."/>
            <person name="Bancroft I."/>
            <person name="Volckaert G."/>
            <person name="Wambutt R."/>
            <person name="Duesterhoeft A."/>
            <person name="Stiekema W."/>
            <person name="Pohl T."/>
            <person name="Entian K.-D."/>
            <person name="Terryn N."/>
            <person name="Hartley N."/>
            <person name="Bent E."/>
            <person name="Johnson S."/>
            <person name="Langham S.-A."/>
            <person name="McCullagh B."/>
            <person name="Robben J."/>
            <person name="Grymonprez B."/>
            <person name="Zimmermann W."/>
            <person name="Ramsperger U."/>
            <person name="Wedler H."/>
            <person name="Balke K."/>
            <person name="Wedler E."/>
            <person name="Peters S."/>
            <person name="van Staveren M."/>
            <person name="Dirkse W."/>
            <person name="Mooijman P."/>
            <person name="Klein Lankhorst R."/>
            <person name="Weitzenegger T."/>
            <person name="Bothe G."/>
            <person name="Rose M."/>
            <person name="Hauf J."/>
            <person name="Berneiser S."/>
            <person name="Hempel S."/>
            <person name="Feldpausch M."/>
            <person name="Lamberth S."/>
            <person name="Villarroel R."/>
            <person name="Gielen J."/>
            <person name="Ardiles W."/>
            <person name="Bents O."/>
            <person name="Lemcke K."/>
            <person name="Kolesov G."/>
            <person name="Mayer K.F.X."/>
            <person name="Rudd S."/>
            <person name="Schoof H."/>
            <person name="Schueller C."/>
            <person name="Zaccaria P."/>
            <person name="Mewes H.-W."/>
            <person name="Bevan M."/>
            <person name="Fransz P.F."/>
        </authorList>
    </citation>
    <scope>NUCLEOTIDE SEQUENCE [LARGE SCALE GENOMIC DNA]</scope>
    <source>
        <strain>cv. Columbia</strain>
    </source>
</reference>
<reference key="2">
    <citation type="journal article" date="2017" name="Plant J.">
        <title>Araport11: a complete reannotation of the Arabidopsis thaliana reference genome.</title>
        <authorList>
            <person name="Cheng C.Y."/>
            <person name="Krishnakumar V."/>
            <person name="Chan A.P."/>
            <person name="Thibaud-Nissen F."/>
            <person name="Schobel S."/>
            <person name="Town C.D."/>
        </authorList>
    </citation>
    <scope>GENOME REANNOTATION</scope>
    <source>
        <strain>cv. Columbia</strain>
    </source>
</reference>
<reference key="3">
    <citation type="journal article" date="2003" name="Science">
        <title>Empirical analysis of transcriptional activity in the Arabidopsis genome.</title>
        <authorList>
            <person name="Yamada K."/>
            <person name="Lim J."/>
            <person name="Dale J.M."/>
            <person name="Chen H."/>
            <person name="Shinn P."/>
            <person name="Palm C.J."/>
            <person name="Southwick A.M."/>
            <person name="Wu H.C."/>
            <person name="Kim C.J."/>
            <person name="Nguyen M."/>
            <person name="Pham P.K."/>
            <person name="Cheuk R.F."/>
            <person name="Karlin-Newmann G."/>
            <person name="Liu S.X."/>
            <person name="Lam B."/>
            <person name="Sakano H."/>
            <person name="Wu T."/>
            <person name="Yu G."/>
            <person name="Miranda M."/>
            <person name="Quach H.L."/>
            <person name="Tripp M."/>
            <person name="Chang C.H."/>
            <person name="Lee J.M."/>
            <person name="Toriumi M.J."/>
            <person name="Chan M.M."/>
            <person name="Tang C.C."/>
            <person name="Onodera C.S."/>
            <person name="Deng J.M."/>
            <person name="Akiyama K."/>
            <person name="Ansari Y."/>
            <person name="Arakawa T."/>
            <person name="Banh J."/>
            <person name="Banno F."/>
            <person name="Bowser L."/>
            <person name="Brooks S.Y."/>
            <person name="Carninci P."/>
            <person name="Chao Q."/>
            <person name="Choy N."/>
            <person name="Enju A."/>
            <person name="Goldsmith A.D."/>
            <person name="Gurjal M."/>
            <person name="Hansen N.F."/>
            <person name="Hayashizaki Y."/>
            <person name="Johnson-Hopson C."/>
            <person name="Hsuan V.W."/>
            <person name="Iida K."/>
            <person name="Karnes M."/>
            <person name="Khan S."/>
            <person name="Koesema E."/>
            <person name="Ishida J."/>
            <person name="Jiang P.X."/>
            <person name="Jones T."/>
            <person name="Kawai J."/>
            <person name="Kamiya A."/>
            <person name="Meyers C."/>
            <person name="Nakajima M."/>
            <person name="Narusaka M."/>
            <person name="Seki M."/>
            <person name="Sakurai T."/>
            <person name="Satou M."/>
            <person name="Tamse R."/>
            <person name="Vaysberg M."/>
            <person name="Wallender E.K."/>
            <person name="Wong C."/>
            <person name="Yamamura Y."/>
            <person name="Yuan S."/>
            <person name="Shinozaki K."/>
            <person name="Davis R.W."/>
            <person name="Theologis A."/>
            <person name="Ecker J.R."/>
        </authorList>
    </citation>
    <scope>NUCLEOTIDE SEQUENCE [LARGE SCALE MRNA]</scope>
    <source>
        <strain>cv. Columbia</strain>
    </source>
</reference>
<reference key="4">
    <citation type="journal article" date="2009" name="Plant Physiol.">
        <title>Large-scale Arabidopsis phosphoproteome profiling reveals novel chloroplast kinase substrates and phosphorylation networks.</title>
        <authorList>
            <person name="Reiland S."/>
            <person name="Messerli G."/>
            <person name="Baerenfaller K."/>
            <person name="Gerrits B."/>
            <person name="Endler A."/>
            <person name="Grossmann J."/>
            <person name="Gruissem W."/>
            <person name="Baginsky S."/>
        </authorList>
    </citation>
    <scope>IDENTIFICATION BY MASS SPECTROMETRY [LARGE SCALE ANALYSIS]</scope>
</reference>
<reference key="5">
    <citation type="journal article" date="2009" name="Plant Cell Physiol.">
        <title>Differential expression control and polarized distribution of plasma membrane-resident SYP1 SNAREs in Arabidopsis thaliana.</title>
        <authorList>
            <person name="Enami K."/>
            <person name="Ichikawa M."/>
            <person name="Uemura T."/>
            <person name="Kutsuna N."/>
            <person name="Hasezawa S."/>
            <person name="Nakagawa T."/>
            <person name="Nakano A."/>
            <person name="Sato M.H."/>
        </authorList>
    </citation>
    <scope>TISSUE SPECIFICITY</scope>
</reference>
<reference key="6">
    <citation type="journal article" date="2014" name="Plant Cell Physiol.">
        <title>Syntaxin of plant proteins SYP123 and SYP132 mediate root hair tip growth in Arabidopsis thaliana.</title>
        <authorList>
            <person name="Ichikawa M."/>
            <person name="Hirano T."/>
            <person name="Enami K."/>
            <person name="Fuselier T."/>
            <person name="Kato N."/>
            <person name="Kwon C."/>
            <person name="Voigt B."/>
            <person name="Schulze-Lefert P."/>
            <person name="Baluska F."/>
            <person name="Sato M.H."/>
        </authorList>
    </citation>
    <scope>FUNCTION</scope>
</reference>
<reference key="7">
    <citation type="journal article" date="2018" name="Dev. Cell">
        <title>Concerted action of evolutionarily ancient and novel SNARE complexes in flowering-plant cytokinesis.</title>
        <authorList>
            <person name="Park M."/>
            <person name="Krause C."/>
            <person name="Karnahl M."/>
            <person name="Reichardt I."/>
            <person name="El Kasmi F."/>
            <person name="Mayer U."/>
            <person name="Stierhof Y.D."/>
            <person name="Hiller U."/>
            <person name="Strompen G."/>
            <person name="Bayer M."/>
            <person name="Kientz M."/>
            <person name="Sato M.H."/>
            <person name="Nishimura M.T."/>
            <person name="Dangl J.L."/>
            <person name="Sanderfoot A.A."/>
            <person name="Juergens G."/>
        </authorList>
    </citation>
    <scope>FUNCTION</scope>
    <scope>SUBCELLULAR LOCATION</scope>
    <scope>DISRUPTION PHENOTYPE</scope>
</reference>
<reference key="8">
    <citation type="journal article" date="2019" name="Plant Physiol.">
        <title>Unusual roles of secretory SNARE SYP132 in plasma membrane H+-ATPase traffic and vegetative plant growth.</title>
        <authorList>
            <person name="Xia L."/>
            <person name="Mar Marques-Bueno M."/>
            <person name="Bruce C.G."/>
            <person name="Karnik R."/>
        </authorList>
    </citation>
    <scope>FUNCTION</scope>
    <scope>SUBCELLULAR LOCATION</scope>
    <scope>INDUCTION</scope>
</reference>
<organism>
    <name type="scientific">Arabidopsis thaliana</name>
    <name type="common">Mouse-ear cress</name>
    <dbReference type="NCBI Taxonomy" id="3702"/>
    <lineage>
        <taxon>Eukaryota</taxon>
        <taxon>Viridiplantae</taxon>
        <taxon>Streptophyta</taxon>
        <taxon>Embryophyta</taxon>
        <taxon>Tracheophyta</taxon>
        <taxon>Spermatophyta</taxon>
        <taxon>Magnoliopsida</taxon>
        <taxon>eudicotyledons</taxon>
        <taxon>Gunneridae</taxon>
        <taxon>Pentapetalae</taxon>
        <taxon>rosids</taxon>
        <taxon>malvids</taxon>
        <taxon>Brassicales</taxon>
        <taxon>Brassicaceae</taxon>
        <taxon>Camelineae</taxon>
        <taxon>Arabidopsis</taxon>
    </lineage>
</organism>
<comment type="function">
    <text evidence="7 8 9 12">Vesicle trafficking protein that functions in the secretory pathway (Probable). Acts in coordination with SYP123 to mediate tip-focused membrane trafficking for root hair tip growth (PubMed:24642714). Functions in root hair elongation by forming SNARE complexes with VAMP721,VAMP722 or VAMP724 (PubMed:24642714). Involved in cytokinesis (PubMed:29396117). Acts as a cell plate-specific syntaxin, required for the fusion of vesicles at the plane of cell division (PubMed:29396117). Required for secretory trafficking to the plasma membrane during interphase (PubMed:29396117). Involved in the regulation of density of the H(+) ATPase proteins at the plasma membrane of root and shoot in epidermal cells (PubMed:30926657). Modulation of SYP132 expression by auxin affects clathrin-sensitive H(+) ATPase traffic from the plasma membrane, and influences apoplastic acidification and plant growth (PubMed:30926657).</text>
</comment>
<comment type="subunit">
    <text evidence="1">Part of the t-SNARE complex.</text>
</comment>
<comment type="subcellular location">
    <subcellularLocation>
        <location evidence="8 9">Cell membrane</location>
        <topology evidence="3">Single-pass type IV membrane protein</topology>
    </subcellularLocation>
</comment>
<comment type="alternative products">
    <event type="alternative splicing"/>
    <isoform>
        <id>Q8VZU2-1</id>
        <name>1</name>
        <sequence type="displayed"/>
    </isoform>
    <text>A number of isoforms are produced. According to EST sequences.</text>
</comment>
<comment type="tissue specificity">
    <text evidence="6">Widely expressed in all tissues throughout plant development.</text>
</comment>
<comment type="induction">
    <text evidence="9">Induced by auxin in roots (PubMed:30926657). Down-regulated by auxin in shoots (PubMed:30926657).</text>
</comment>
<comment type="disruption phenotype">
    <text evidence="8">Defect in cytokinesis in embryos and defect in seedling growth.</text>
</comment>
<comment type="miscellaneous">
    <text evidence="7">Plants silencing SYP132 exhibit reduced root hair length.</text>
</comment>
<comment type="similarity">
    <text evidence="11">Belongs to the syntaxin family.</text>
</comment>
<comment type="sequence caution" evidence="11">
    <conflict type="erroneous gene model prediction">
        <sequence resource="EMBL-CDS" id="CAB93709"/>
    </conflict>
</comment>